<sequence>MSARWTTAVLDPQITGGLAVARSPDGFLVDANGALFPRDWLKRQDLDVLCEHGIGHFDGQPVFLLELRSATDVPGCSWRGLRAFMLEGDFDTYKVLGYAAQIGTWAREHRFCGSCGQAMTQIRWERAMYCQPCDLRSYPRISPSMIVLVTRGDEILLARSPRFVTGVYSTLAGFAEPGESAEDCLVREVREEVAVEVQNIQYVGSQCWPFPHSMMLGFHAEYAGGDIVMQPDEIEDAQWFSVHDLPPLPAGRSIARYLIDLYVARRLGLPEPVLPR</sequence>
<protein>
    <recommendedName>
        <fullName evidence="1">NAD-capped RNA hydrolase NudC</fullName>
        <shortName evidence="1">DeNADding enzyme NudC</shortName>
        <ecNumber evidence="1">3.6.1.-</ecNumber>
    </recommendedName>
    <alternativeName>
        <fullName evidence="1">NADH pyrophosphatase</fullName>
        <ecNumber evidence="1">3.6.1.22</ecNumber>
    </alternativeName>
</protein>
<organism>
    <name type="scientific">Pseudomonas putida (strain GB-1)</name>
    <dbReference type="NCBI Taxonomy" id="76869"/>
    <lineage>
        <taxon>Bacteria</taxon>
        <taxon>Pseudomonadati</taxon>
        <taxon>Pseudomonadota</taxon>
        <taxon>Gammaproteobacteria</taxon>
        <taxon>Pseudomonadales</taxon>
        <taxon>Pseudomonadaceae</taxon>
        <taxon>Pseudomonas</taxon>
    </lineage>
</organism>
<accession>B0KMR5</accession>
<name>NUDC_PSEPG</name>
<feature type="chain" id="PRO_1000078948" description="NAD-capped RNA hydrolase NudC">
    <location>
        <begin position="1"/>
        <end position="276"/>
    </location>
</feature>
<feature type="domain" description="Nudix hydrolase" evidence="1">
    <location>
        <begin position="139"/>
        <end position="262"/>
    </location>
</feature>
<feature type="short sequence motif" description="Nudix box" evidence="1">
    <location>
        <begin position="173"/>
        <end position="194"/>
    </location>
</feature>
<feature type="binding site" evidence="1">
    <location>
        <position position="82"/>
    </location>
    <ligand>
        <name>substrate</name>
    </ligand>
</feature>
<feature type="binding site" evidence="1">
    <location>
        <position position="112"/>
    </location>
    <ligand>
        <name>Zn(2+)</name>
        <dbReference type="ChEBI" id="CHEBI:29105"/>
    </ligand>
</feature>
<feature type="binding site" evidence="1">
    <location>
        <position position="115"/>
    </location>
    <ligand>
        <name>Zn(2+)</name>
        <dbReference type="ChEBI" id="CHEBI:29105"/>
    </ligand>
</feature>
<feature type="binding site" evidence="1">
    <location>
        <position position="125"/>
    </location>
    <ligand>
        <name>substrate</name>
    </ligand>
</feature>
<feature type="binding site" evidence="1">
    <location>
        <position position="130"/>
    </location>
    <ligand>
        <name>Zn(2+)</name>
        <dbReference type="ChEBI" id="CHEBI:29105"/>
    </ligand>
</feature>
<feature type="binding site" evidence="1">
    <location>
        <position position="133"/>
    </location>
    <ligand>
        <name>Zn(2+)</name>
        <dbReference type="ChEBI" id="CHEBI:29105"/>
    </ligand>
</feature>
<feature type="binding site" evidence="1">
    <location>
        <position position="138"/>
    </location>
    <ligand>
        <name>substrate</name>
    </ligand>
</feature>
<feature type="binding site" evidence="1">
    <location>
        <position position="172"/>
    </location>
    <ligand>
        <name>a divalent metal cation</name>
        <dbReference type="ChEBI" id="CHEBI:60240"/>
        <label>1</label>
    </ligand>
</feature>
<feature type="binding site" evidence="1">
    <location>
        <position position="188"/>
    </location>
    <ligand>
        <name>a divalent metal cation</name>
        <dbReference type="ChEBI" id="CHEBI:60240"/>
        <label>2</label>
    </ligand>
</feature>
<feature type="binding site" evidence="1">
    <location>
        <position position="188"/>
    </location>
    <ligand>
        <name>a divalent metal cation</name>
        <dbReference type="ChEBI" id="CHEBI:60240"/>
        <label>3</label>
    </ligand>
</feature>
<feature type="binding site" evidence="1">
    <location>
        <position position="192"/>
    </location>
    <ligand>
        <name>a divalent metal cation</name>
        <dbReference type="ChEBI" id="CHEBI:60240"/>
        <label>1</label>
    </ligand>
</feature>
<feature type="binding site" evidence="1">
    <location>
        <position position="192"/>
    </location>
    <ligand>
        <name>a divalent metal cation</name>
        <dbReference type="ChEBI" id="CHEBI:60240"/>
        <label>3</label>
    </ligand>
</feature>
<feature type="binding site" evidence="1">
    <location>
        <begin position="206"/>
        <end position="213"/>
    </location>
    <ligand>
        <name>substrate</name>
    </ligand>
</feature>
<feature type="binding site" evidence="1">
    <location>
        <position position="233"/>
    </location>
    <ligand>
        <name>a divalent metal cation</name>
        <dbReference type="ChEBI" id="CHEBI:60240"/>
        <label>1</label>
    </ligand>
</feature>
<feature type="binding site" evidence="1">
    <location>
        <position position="233"/>
    </location>
    <ligand>
        <name>a divalent metal cation</name>
        <dbReference type="ChEBI" id="CHEBI:60240"/>
        <label>3</label>
    </ligand>
</feature>
<feature type="binding site" evidence="1">
    <location>
        <position position="255"/>
    </location>
    <ligand>
        <name>substrate</name>
    </ligand>
</feature>
<dbReference type="EC" id="3.6.1.-" evidence="1"/>
<dbReference type="EC" id="3.6.1.22" evidence="1"/>
<dbReference type="EMBL" id="CP000926">
    <property type="protein sequence ID" value="ABY99519.1"/>
    <property type="molecule type" value="Genomic_DNA"/>
</dbReference>
<dbReference type="RefSeq" id="WP_012273230.1">
    <property type="nucleotide sequence ID" value="NC_010322.1"/>
</dbReference>
<dbReference type="SMR" id="B0KMR5"/>
<dbReference type="KEGG" id="ppg:PputGB1_3628"/>
<dbReference type="eggNOG" id="COG2816">
    <property type="taxonomic scope" value="Bacteria"/>
</dbReference>
<dbReference type="HOGENOM" id="CLU_037162_0_1_6"/>
<dbReference type="Proteomes" id="UP000002157">
    <property type="component" value="Chromosome"/>
</dbReference>
<dbReference type="GO" id="GO:0005829">
    <property type="term" value="C:cytosol"/>
    <property type="evidence" value="ECO:0007669"/>
    <property type="project" value="TreeGrafter"/>
</dbReference>
<dbReference type="GO" id="GO:0000287">
    <property type="term" value="F:magnesium ion binding"/>
    <property type="evidence" value="ECO:0007669"/>
    <property type="project" value="UniProtKB-UniRule"/>
</dbReference>
<dbReference type="GO" id="GO:0030145">
    <property type="term" value="F:manganese ion binding"/>
    <property type="evidence" value="ECO:0007669"/>
    <property type="project" value="UniProtKB-UniRule"/>
</dbReference>
<dbReference type="GO" id="GO:0000210">
    <property type="term" value="F:NAD+ diphosphatase activity"/>
    <property type="evidence" value="ECO:0007669"/>
    <property type="project" value="UniProtKB-UniRule"/>
</dbReference>
<dbReference type="GO" id="GO:0035529">
    <property type="term" value="F:NADH pyrophosphatase activity"/>
    <property type="evidence" value="ECO:0007669"/>
    <property type="project" value="TreeGrafter"/>
</dbReference>
<dbReference type="GO" id="GO:0110153">
    <property type="term" value="F:RNA NAD-cap (NMN-forming) hydrolase activity"/>
    <property type="evidence" value="ECO:0007669"/>
    <property type="project" value="RHEA"/>
</dbReference>
<dbReference type="GO" id="GO:0008270">
    <property type="term" value="F:zinc ion binding"/>
    <property type="evidence" value="ECO:0007669"/>
    <property type="project" value="UniProtKB-UniRule"/>
</dbReference>
<dbReference type="GO" id="GO:0019677">
    <property type="term" value="P:NAD catabolic process"/>
    <property type="evidence" value="ECO:0007669"/>
    <property type="project" value="TreeGrafter"/>
</dbReference>
<dbReference type="GO" id="GO:0006734">
    <property type="term" value="P:NADH metabolic process"/>
    <property type="evidence" value="ECO:0007669"/>
    <property type="project" value="TreeGrafter"/>
</dbReference>
<dbReference type="GO" id="GO:0006742">
    <property type="term" value="P:NADP catabolic process"/>
    <property type="evidence" value="ECO:0007669"/>
    <property type="project" value="TreeGrafter"/>
</dbReference>
<dbReference type="CDD" id="cd03429">
    <property type="entry name" value="NUDIX_NADH_pyrophosphatase_Nudt13"/>
    <property type="match status" value="1"/>
</dbReference>
<dbReference type="Gene3D" id="3.90.79.20">
    <property type="match status" value="1"/>
</dbReference>
<dbReference type="Gene3D" id="3.90.79.10">
    <property type="entry name" value="Nucleoside Triphosphate Pyrophosphohydrolase"/>
    <property type="match status" value="1"/>
</dbReference>
<dbReference type="HAMAP" id="MF_00297">
    <property type="entry name" value="Nudix_NudC"/>
    <property type="match status" value="1"/>
</dbReference>
<dbReference type="InterPro" id="IPR050241">
    <property type="entry name" value="NAD-cap_RNA_hydrolase_NudC"/>
</dbReference>
<dbReference type="InterPro" id="IPR015375">
    <property type="entry name" value="NADH_PPase-like_N"/>
</dbReference>
<dbReference type="InterPro" id="IPR049734">
    <property type="entry name" value="NudC-like_C"/>
</dbReference>
<dbReference type="InterPro" id="IPR015797">
    <property type="entry name" value="NUDIX_hydrolase-like_dom_sf"/>
</dbReference>
<dbReference type="InterPro" id="IPR000086">
    <property type="entry name" value="NUDIX_hydrolase_dom"/>
</dbReference>
<dbReference type="InterPro" id="IPR022925">
    <property type="entry name" value="RNA_Hydrolase_NudC"/>
</dbReference>
<dbReference type="InterPro" id="IPR015376">
    <property type="entry name" value="Znr_NADH_PPase"/>
</dbReference>
<dbReference type="NCBIfam" id="NF001299">
    <property type="entry name" value="PRK00241.1"/>
    <property type="match status" value="1"/>
</dbReference>
<dbReference type="PANTHER" id="PTHR42904:SF6">
    <property type="entry name" value="NAD-CAPPED RNA HYDROLASE NUDT12"/>
    <property type="match status" value="1"/>
</dbReference>
<dbReference type="PANTHER" id="PTHR42904">
    <property type="entry name" value="NUDIX HYDROLASE, NUDC SUBFAMILY"/>
    <property type="match status" value="1"/>
</dbReference>
<dbReference type="Pfam" id="PF00293">
    <property type="entry name" value="NUDIX"/>
    <property type="match status" value="1"/>
</dbReference>
<dbReference type="Pfam" id="PF09296">
    <property type="entry name" value="NUDIX-like"/>
    <property type="match status" value="1"/>
</dbReference>
<dbReference type="Pfam" id="PF09297">
    <property type="entry name" value="Zn_ribbon_NUD"/>
    <property type="match status" value="1"/>
</dbReference>
<dbReference type="SUPFAM" id="SSF55811">
    <property type="entry name" value="Nudix"/>
    <property type="match status" value="2"/>
</dbReference>
<dbReference type="PROSITE" id="PS51462">
    <property type="entry name" value="NUDIX"/>
    <property type="match status" value="1"/>
</dbReference>
<reference key="1">
    <citation type="submission" date="2008-01" db="EMBL/GenBank/DDBJ databases">
        <title>Complete sequence of Pseudomonas putida GB-1.</title>
        <authorList>
            <consortium name="US DOE Joint Genome Institute"/>
            <person name="Copeland A."/>
            <person name="Lucas S."/>
            <person name="Lapidus A."/>
            <person name="Barry K."/>
            <person name="Glavina del Rio T."/>
            <person name="Dalin E."/>
            <person name="Tice H."/>
            <person name="Pitluck S."/>
            <person name="Bruce D."/>
            <person name="Goodwin L."/>
            <person name="Chertkov O."/>
            <person name="Brettin T."/>
            <person name="Detter J.C."/>
            <person name="Han C."/>
            <person name="Kuske C.R."/>
            <person name="Schmutz J."/>
            <person name="Larimer F."/>
            <person name="Land M."/>
            <person name="Hauser L."/>
            <person name="Kyrpides N."/>
            <person name="Kim E."/>
            <person name="McCarthy J.K."/>
            <person name="Richardson P."/>
        </authorList>
    </citation>
    <scope>NUCLEOTIDE SEQUENCE [LARGE SCALE GENOMIC DNA]</scope>
    <source>
        <strain>GB-1</strain>
    </source>
</reference>
<comment type="function">
    <text evidence="1">mRNA decapping enzyme that specifically removes the nicotinamide adenine dinucleotide (NAD) cap from a subset of mRNAs by hydrolyzing the diphosphate linkage to produce nicotinamide mononucleotide (NMN) and 5' monophosphate mRNA. The NAD-cap is present at the 5'-end of some mRNAs and stabilizes RNA against 5'-processing. Has preference for mRNAs with a 5'-end purine. Catalyzes the hydrolysis of a broad range of dinucleotide pyrophosphates.</text>
</comment>
<comment type="catalytic activity">
    <reaction evidence="1">
        <text>a 5'-end NAD(+)-phospho-ribonucleoside in mRNA + H2O = a 5'-end phospho-adenosine-phospho-ribonucleoside in mRNA + beta-nicotinamide D-ribonucleotide + 2 H(+)</text>
        <dbReference type="Rhea" id="RHEA:60876"/>
        <dbReference type="Rhea" id="RHEA-COMP:15698"/>
        <dbReference type="Rhea" id="RHEA-COMP:15719"/>
        <dbReference type="ChEBI" id="CHEBI:14649"/>
        <dbReference type="ChEBI" id="CHEBI:15377"/>
        <dbReference type="ChEBI" id="CHEBI:15378"/>
        <dbReference type="ChEBI" id="CHEBI:144029"/>
        <dbReference type="ChEBI" id="CHEBI:144051"/>
    </reaction>
    <physiologicalReaction direction="left-to-right" evidence="1">
        <dbReference type="Rhea" id="RHEA:60877"/>
    </physiologicalReaction>
</comment>
<comment type="catalytic activity">
    <reaction evidence="1">
        <text>NAD(+) + H2O = beta-nicotinamide D-ribonucleotide + AMP + 2 H(+)</text>
        <dbReference type="Rhea" id="RHEA:11800"/>
        <dbReference type="ChEBI" id="CHEBI:14649"/>
        <dbReference type="ChEBI" id="CHEBI:15377"/>
        <dbReference type="ChEBI" id="CHEBI:15378"/>
        <dbReference type="ChEBI" id="CHEBI:57540"/>
        <dbReference type="ChEBI" id="CHEBI:456215"/>
        <dbReference type="EC" id="3.6.1.22"/>
    </reaction>
</comment>
<comment type="catalytic activity">
    <reaction evidence="1">
        <text>NADH + H2O = reduced beta-nicotinamide D-ribonucleotide + AMP + 2 H(+)</text>
        <dbReference type="Rhea" id="RHEA:48868"/>
        <dbReference type="ChEBI" id="CHEBI:15377"/>
        <dbReference type="ChEBI" id="CHEBI:15378"/>
        <dbReference type="ChEBI" id="CHEBI:57945"/>
        <dbReference type="ChEBI" id="CHEBI:90832"/>
        <dbReference type="ChEBI" id="CHEBI:456215"/>
        <dbReference type="EC" id="3.6.1.22"/>
    </reaction>
</comment>
<comment type="cofactor">
    <cofactor evidence="1">
        <name>Mg(2+)</name>
        <dbReference type="ChEBI" id="CHEBI:18420"/>
    </cofactor>
    <cofactor evidence="1">
        <name>Mn(2+)</name>
        <dbReference type="ChEBI" id="CHEBI:29035"/>
    </cofactor>
    <text evidence="1">Divalent metal cations. Mg(2+) or Mn(2+).</text>
</comment>
<comment type="cofactor">
    <cofactor evidence="1">
        <name>Zn(2+)</name>
        <dbReference type="ChEBI" id="CHEBI:29105"/>
    </cofactor>
    <text evidence="1">Binds 1 zinc ion per subunit.</text>
</comment>
<comment type="subunit">
    <text evidence="1">Homodimer.</text>
</comment>
<comment type="similarity">
    <text evidence="1">Belongs to the Nudix hydrolase family. NudC subfamily.</text>
</comment>
<gene>
    <name evidence="1" type="primary">nudC</name>
    <name type="ordered locus">PputGB1_3628</name>
</gene>
<proteinExistence type="inferred from homology"/>
<evidence type="ECO:0000255" key="1">
    <source>
        <dbReference type="HAMAP-Rule" id="MF_00297"/>
    </source>
</evidence>
<keyword id="KW-0378">Hydrolase</keyword>
<keyword id="KW-0460">Magnesium</keyword>
<keyword id="KW-0464">Manganese</keyword>
<keyword id="KW-0479">Metal-binding</keyword>
<keyword id="KW-0520">NAD</keyword>
<keyword id="KW-0862">Zinc</keyword>